<proteinExistence type="evidence at protein level"/>
<organism>
    <name type="scientific">Bos taurus</name>
    <name type="common">Bovine</name>
    <dbReference type="NCBI Taxonomy" id="9913"/>
    <lineage>
        <taxon>Eukaryota</taxon>
        <taxon>Metazoa</taxon>
        <taxon>Chordata</taxon>
        <taxon>Craniata</taxon>
        <taxon>Vertebrata</taxon>
        <taxon>Euteleostomi</taxon>
        <taxon>Mammalia</taxon>
        <taxon>Eutheria</taxon>
        <taxon>Laurasiatheria</taxon>
        <taxon>Artiodactyla</taxon>
        <taxon>Ruminantia</taxon>
        <taxon>Pecora</taxon>
        <taxon>Bovidae</taxon>
        <taxon>Bovinae</taxon>
        <taxon>Bos</taxon>
    </lineage>
</organism>
<accession>Q28193</accession>
<dbReference type="EC" id="3.4.21.75" evidence="8"/>
<dbReference type="EMBL" id="X75956">
    <property type="protein sequence ID" value="CAA53569.1"/>
    <property type="molecule type" value="mRNA"/>
</dbReference>
<dbReference type="PIR" id="I46044">
    <property type="entry name" value="I46044"/>
</dbReference>
<dbReference type="RefSeq" id="NP_776561.1">
    <property type="nucleotide sequence ID" value="NM_174136.2"/>
</dbReference>
<dbReference type="SMR" id="Q28193"/>
<dbReference type="ELM" id="Q28193"/>
<dbReference type="FunCoup" id="Q28193">
    <property type="interactions" value="333"/>
</dbReference>
<dbReference type="STRING" id="9913.ENSBTAP00000065278"/>
<dbReference type="MEROPS" id="S08.071"/>
<dbReference type="GlyCosmos" id="Q28193">
    <property type="glycosylation" value="3 sites, No reported glycans"/>
</dbReference>
<dbReference type="GlyGen" id="Q28193">
    <property type="glycosylation" value="3 sites"/>
</dbReference>
<dbReference type="PaxDb" id="9913-ENSBTAP00000003826"/>
<dbReference type="GeneID" id="281374"/>
<dbReference type="KEGG" id="bta:281374"/>
<dbReference type="CTD" id="5045"/>
<dbReference type="eggNOG" id="KOG3525">
    <property type="taxonomic scope" value="Eukaryota"/>
</dbReference>
<dbReference type="InParanoid" id="Q28193"/>
<dbReference type="OrthoDB" id="300641at2759"/>
<dbReference type="Proteomes" id="UP000009136">
    <property type="component" value="Unplaced"/>
</dbReference>
<dbReference type="GO" id="GO:0010008">
    <property type="term" value="C:endosome membrane"/>
    <property type="evidence" value="ECO:0007669"/>
    <property type="project" value="UniProtKB-SubCell"/>
</dbReference>
<dbReference type="GO" id="GO:0005576">
    <property type="term" value="C:extracellular region"/>
    <property type="evidence" value="ECO:0007669"/>
    <property type="project" value="UniProtKB-SubCell"/>
</dbReference>
<dbReference type="GO" id="GO:0000139">
    <property type="term" value="C:Golgi membrane"/>
    <property type="evidence" value="ECO:0000318"/>
    <property type="project" value="GO_Central"/>
</dbReference>
<dbReference type="GO" id="GO:0005886">
    <property type="term" value="C:plasma membrane"/>
    <property type="evidence" value="ECO:0007669"/>
    <property type="project" value="UniProtKB-SubCell"/>
</dbReference>
<dbReference type="GO" id="GO:0005802">
    <property type="term" value="C:trans-Golgi network"/>
    <property type="evidence" value="ECO:0000318"/>
    <property type="project" value="GO_Central"/>
</dbReference>
<dbReference type="GO" id="GO:1904399">
    <property type="term" value="F:heparan sulfate binding"/>
    <property type="evidence" value="ECO:0000250"/>
    <property type="project" value="UniProtKB"/>
</dbReference>
<dbReference type="GO" id="GO:0008201">
    <property type="term" value="F:heparin binding"/>
    <property type="evidence" value="ECO:0000250"/>
    <property type="project" value="UniProtKB"/>
</dbReference>
<dbReference type="GO" id="GO:0046872">
    <property type="term" value="F:metal ion binding"/>
    <property type="evidence" value="ECO:0007669"/>
    <property type="project" value="UniProtKB-KW"/>
</dbReference>
<dbReference type="GO" id="GO:0004252">
    <property type="term" value="F:serine-type endopeptidase activity"/>
    <property type="evidence" value="ECO:0000250"/>
    <property type="project" value="UniProtKB"/>
</dbReference>
<dbReference type="GO" id="GO:0140447">
    <property type="term" value="P:cytokine precursor processing"/>
    <property type="evidence" value="ECO:0000250"/>
    <property type="project" value="UniProtKB"/>
</dbReference>
<dbReference type="GO" id="GO:0016486">
    <property type="term" value="P:peptide hormone processing"/>
    <property type="evidence" value="ECO:0000318"/>
    <property type="project" value="GO_Central"/>
</dbReference>
<dbReference type="CDD" id="cd00064">
    <property type="entry name" value="FU"/>
    <property type="match status" value="2"/>
</dbReference>
<dbReference type="CDD" id="cd04059">
    <property type="entry name" value="Peptidases_S8_Protein_convertases_Kexins_Furin-like"/>
    <property type="match status" value="1"/>
</dbReference>
<dbReference type="FunFam" id="3.40.50.200:FF:000001">
    <property type="entry name" value="Furin 2, isoform B"/>
    <property type="match status" value="1"/>
</dbReference>
<dbReference type="FunFam" id="2.60.120.260:FF:000034">
    <property type="entry name" value="furin isoform X2"/>
    <property type="match status" value="1"/>
</dbReference>
<dbReference type="FunFam" id="2.10.220.10:FF:000023">
    <property type="entry name" value="Furin, paired basic amino acid cleaving enzyme"/>
    <property type="match status" value="1"/>
</dbReference>
<dbReference type="FunFam" id="3.30.70.850:FF:000001">
    <property type="entry name" value="Proprotein convertase subtilisin/kexin type 5"/>
    <property type="match status" value="1"/>
</dbReference>
<dbReference type="Gene3D" id="2.60.120.260">
    <property type="entry name" value="Galactose-binding domain-like"/>
    <property type="match status" value="1"/>
</dbReference>
<dbReference type="Gene3D" id="2.10.220.10">
    <property type="entry name" value="Hormone Receptor, Insulin-like Growth Factor Receptor 1, Chain A, domain 2"/>
    <property type="match status" value="1"/>
</dbReference>
<dbReference type="Gene3D" id="3.30.70.850">
    <property type="entry name" value="Peptidase S8, pro-domain"/>
    <property type="match status" value="1"/>
</dbReference>
<dbReference type="Gene3D" id="3.40.50.200">
    <property type="entry name" value="Peptidase S8/S53 domain"/>
    <property type="match status" value="1"/>
</dbReference>
<dbReference type="InterPro" id="IPR006212">
    <property type="entry name" value="Furin_repeat"/>
</dbReference>
<dbReference type="InterPro" id="IPR008979">
    <property type="entry name" value="Galactose-bd-like_sf"/>
</dbReference>
<dbReference type="InterPro" id="IPR009030">
    <property type="entry name" value="Growth_fac_rcpt_cys_sf"/>
</dbReference>
<dbReference type="InterPro" id="IPR034182">
    <property type="entry name" value="Kexin/furin"/>
</dbReference>
<dbReference type="InterPro" id="IPR002884">
    <property type="entry name" value="P_dom"/>
</dbReference>
<dbReference type="InterPro" id="IPR000209">
    <property type="entry name" value="Peptidase_S8/S53_dom"/>
</dbReference>
<dbReference type="InterPro" id="IPR036852">
    <property type="entry name" value="Peptidase_S8/S53_dom_sf"/>
</dbReference>
<dbReference type="InterPro" id="IPR023827">
    <property type="entry name" value="Peptidase_S8_Asp-AS"/>
</dbReference>
<dbReference type="InterPro" id="IPR022398">
    <property type="entry name" value="Peptidase_S8_His-AS"/>
</dbReference>
<dbReference type="InterPro" id="IPR015500">
    <property type="entry name" value="Peptidase_S8_subtilisin-rel"/>
</dbReference>
<dbReference type="InterPro" id="IPR032815">
    <property type="entry name" value="S8_pro-domain"/>
</dbReference>
<dbReference type="InterPro" id="IPR038466">
    <property type="entry name" value="S8_pro-domain_sf"/>
</dbReference>
<dbReference type="PANTHER" id="PTHR42884:SF1">
    <property type="entry name" value="FURIN"/>
    <property type="match status" value="1"/>
</dbReference>
<dbReference type="PANTHER" id="PTHR42884">
    <property type="entry name" value="PROPROTEIN CONVERTASE SUBTILISIN/KEXIN-RELATED"/>
    <property type="match status" value="1"/>
</dbReference>
<dbReference type="Pfam" id="PF01483">
    <property type="entry name" value="P_proprotein"/>
    <property type="match status" value="1"/>
</dbReference>
<dbReference type="Pfam" id="PF00082">
    <property type="entry name" value="Peptidase_S8"/>
    <property type="match status" value="1"/>
</dbReference>
<dbReference type="Pfam" id="PF16470">
    <property type="entry name" value="S8_pro-domain"/>
    <property type="match status" value="1"/>
</dbReference>
<dbReference type="PRINTS" id="PR00723">
    <property type="entry name" value="SUBTILISIN"/>
</dbReference>
<dbReference type="SMART" id="SM00261">
    <property type="entry name" value="FU"/>
    <property type="match status" value="2"/>
</dbReference>
<dbReference type="SUPFAM" id="SSF49785">
    <property type="entry name" value="Galactose-binding domain-like"/>
    <property type="match status" value="1"/>
</dbReference>
<dbReference type="SUPFAM" id="SSF57184">
    <property type="entry name" value="Growth factor receptor domain"/>
    <property type="match status" value="1"/>
</dbReference>
<dbReference type="SUPFAM" id="SSF54897">
    <property type="entry name" value="Protease propeptides/inhibitors"/>
    <property type="match status" value="1"/>
</dbReference>
<dbReference type="SUPFAM" id="SSF52743">
    <property type="entry name" value="Subtilisin-like"/>
    <property type="match status" value="1"/>
</dbReference>
<dbReference type="PROSITE" id="PS51829">
    <property type="entry name" value="P_HOMO_B"/>
    <property type="match status" value="1"/>
</dbReference>
<dbReference type="PROSITE" id="PS51892">
    <property type="entry name" value="SUBTILASE"/>
    <property type="match status" value="1"/>
</dbReference>
<dbReference type="PROSITE" id="PS00136">
    <property type="entry name" value="SUBTILASE_ASP"/>
    <property type="match status" value="1"/>
</dbReference>
<dbReference type="PROSITE" id="PS00137">
    <property type="entry name" value="SUBTILASE_HIS"/>
    <property type="match status" value="1"/>
</dbReference>
<comment type="function">
    <text evidence="1 2 8">Ubiquitous endoprotease within constitutive secretory pathways capable of cleavage at the RX(K/R)R consensus motif (PubMed:7806563). Mediates processing of TGFB1, an essential step in TGF-beta-1 activation (By similarity). By mediating processing of accessory subunit ATP6AP1/Ac45 of the V-ATPase, regulates the acidification of dense-core secretory granules in islets of Langerhans cells (By similarity).</text>
</comment>
<comment type="catalytic activity">
    <reaction evidence="8">
        <text>Release of mature proteins from their proproteins by cleavage of -Arg-Xaa-Yaa-Arg-|-Zaa- bonds, where Xaa can be any amino acid and Yaa is Arg or Lys. Releases albumin, complement component C3 and von Willebrand factor from their respective precursors.</text>
        <dbReference type="EC" id="3.4.21.75"/>
    </reaction>
</comment>
<comment type="cofactor">
    <cofactor evidence="8">
        <name>Ca(2+)</name>
        <dbReference type="ChEBI" id="CHEBI:29108"/>
    </cofactor>
    <text evidence="1">Binds 3 calcium ions per subunit.</text>
</comment>
<comment type="activity regulation">
    <text evidence="1">Inhibited by the not secondly cleaved propeptide. Inhibited by m-guanidinomethyl-phenylacetyl-Arg-Val-Arg-(amidomethyl)-benzamidine (m-guanidinomethyl-Phac-RVR-Amb) and 4-guanidinomethyl-phenylacetyl-Arg-Tle-Arg-4-amidinobenzylamide (MI-1148). Inhibited by Decanoyl-Arg-Val-Lys-Arg-chloromethylketone (decanoyl-RVKR-CMK). Inhibited by heparin/heparan sulfate-binding.</text>
</comment>
<comment type="subunit">
    <text evidence="1 2">Interacts with FLNA. Binds to PACS1 which mediates TGN localization and connection to clathrin adapters.</text>
</comment>
<comment type="subcellular location">
    <subcellularLocation>
        <location evidence="8">Golgi apparatus</location>
        <location evidence="8">trans-Golgi network membrane</location>
        <topology evidence="9">Single-pass type I membrane protein</topology>
    </subcellularLocation>
    <subcellularLocation>
        <location evidence="8">Cell membrane</location>
        <topology evidence="9">Single-pass type I membrane protein</topology>
    </subcellularLocation>
    <subcellularLocation>
        <location evidence="8">Secreted</location>
    </subcellularLocation>
    <subcellularLocation>
        <location evidence="1">Endosome membrane</location>
        <topology evidence="9">Single-pass type I membrane protein</topology>
    </subcellularLocation>
    <text evidence="8">Shuttles between the trans-Golgi network and the cell surface. Propeptide cleavage is a prerequisite for exit of furin molecules out of the endoplasmic reticulum (ER). A second cleavage within the propeptide occurs in the trans Golgi network (TGN), followed by the release of the propeptide and the activation of furin.</text>
</comment>
<comment type="domain">
    <text evidence="1">Contains a cytoplasmic domain responsible for its TGN localization and recycling from the cell surface.</text>
</comment>
<comment type="PTM">
    <text evidence="8">The inhibition peptide, which plays the role of an intramolecular chaperone, is autocatalytically removed in the endoplasmic reticulum (ER) and remains non-covalently bound to furin as a potent autoinhibitor. Following transport to the trans Golgi, a second cleavage within the inhibition propeptide results in propeptide dissociation and furin activation.</text>
</comment>
<comment type="PTM">
    <text evidence="1">Phosphorylation is required for TGN localization of the endoprotease. In vivo, exists as di-, mono- and non-phosphorylated forms.</text>
</comment>
<comment type="PTM">
    <text evidence="8">N-glycosylated.</text>
</comment>
<comment type="similarity">
    <text evidence="9">Belongs to the peptidase S8 family. Furin subfamily.</text>
</comment>
<gene>
    <name type="primary">FURIN</name>
    <name type="synonym">FUR</name>
    <name type="synonym">PACE</name>
</gene>
<name>FURIN_BOVIN</name>
<evidence type="ECO:0000250" key="1">
    <source>
        <dbReference type="UniProtKB" id="P09958"/>
    </source>
</evidence>
<evidence type="ECO:0000250" key="2">
    <source>
        <dbReference type="UniProtKB" id="P23188"/>
    </source>
</evidence>
<evidence type="ECO:0000255" key="3"/>
<evidence type="ECO:0000255" key="4">
    <source>
        <dbReference type="PROSITE-ProRule" id="PRU00293"/>
    </source>
</evidence>
<evidence type="ECO:0000255" key="5">
    <source>
        <dbReference type="PROSITE-ProRule" id="PRU01173"/>
    </source>
</evidence>
<evidence type="ECO:0000255" key="6">
    <source>
        <dbReference type="PROSITE-ProRule" id="PRU01240"/>
    </source>
</evidence>
<evidence type="ECO:0000256" key="7">
    <source>
        <dbReference type="SAM" id="MobiDB-lite"/>
    </source>
</evidence>
<evidence type="ECO:0000269" key="8">
    <source>
    </source>
</evidence>
<evidence type="ECO:0000305" key="9"/>
<reference key="1">
    <citation type="journal article" date="1994" name="J. Cell Biol.">
        <title>Maturation of the trans-Golgi network protease furin: compartmentalization of propeptide removal, substrate cleavage, and COOH-terminal truncation.</title>
        <authorList>
            <person name="Vey M."/>
            <person name="Schaefer W."/>
            <person name="Berghoefer S."/>
            <person name="Klenk H."/>
            <person name="Garten W."/>
        </authorList>
    </citation>
    <scope>NUCLEOTIDE SEQUENCE [MRNA]</scope>
    <scope>FUNCTION</scope>
    <scope>CATALYTIC ACTIVITY</scope>
    <scope>COFACTOR</scope>
    <scope>SUBCELLULAR LOCATION</scope>
    <scope>PROTEOLYTIC PROCESSING</scope>
    <scope>GLYCOSYLATION</scope>
    <source>
        <tissue>Kidney</tissue>
    </source>
</reference>
<sequence>MELRPWLFWVVAAAGALVLLVADARGEKVFTNTWAVHIPGGPAVADRVARKHGFLNLGQIFGDYYHFWHRAVTKRSLSPHRLGHNRLQREPQVKWLEQQVAKRRAKRDIYQEPTDPKFPQQWYLSGVTQRDLNVKEAWAQGYTGRGIVVSILDDGIEKNHPDLAGNYDPGASFDVNDQDPDPQPRYTQMNDNRHGTRCAGEVAAVANNGVCGVGVAYNARIGGVRMLDGEVTDAVEARSLGLNPNHIHIYSASWGPEDDGKTVDGPAHLAEEAFFRGVSQGRGGLGSIFVWASGNGGREHDSCNCDGYTNSIYTLSISSATQFGNVPWYSEACSSTLATTYSSGNQNEKQIVTTDLRQKCTESHTGTSAFAPLAAGIIALTLEANKNLTWRDMQHLVVRTSKPAHLNANDWATNGVGRKVSHSYGYGLLDAGAMVALAQNWTTVAPQRKCTIDILTEPKDIGKRLEVRKTVTACLGEPSHITRLEHAQARLTLSYNRRGDLAIHLVSPMGTRSTLLAARPHDYSADGFNDWAFMTTHSWDEDPSGEWVLEIENTSEANNYGTLTKFTLVLYGTAPEGLPTPPESIGCKTLTSSQACVVCEEGFSLHQKNCVQHCPPGFAPQVLDTHYSTENDVEIIRASVCTPCHASCATCQGPAPTDCLSCPSHASLDPVEQTCSRQSQSSRESHQQQPPPPPRPPPAEVATEPRLRADLLPSHLPEVVAGLSCAFIVLVFVTVFLVLQLRSGFSFRGVKVYTMDRGLISYKGLPPEAWQEECPSDSEEDEGRGERTAFIKDQSAL</sequence>
<keyword id="KW-0068">Autocatalytic cleavage</keyword>
<keyword id="KW-0106">Calcium</keyword>
<keyword id="KW-1003">Cell membrane</keyword>
<keyword id="KW-0165">Cleavage on pair of basic residues</keyword>
<keyword id="KW-1015">Disulfide bond</keyword>
<keyword id="KW-0967">Endosome</keyword>
<keyword id="KW-0325">Glycoprotein</keyword>
<keyword id="KW-0333">Golgi apparatus</keyword>
<keyword id="KW-0358">Heparin-binding</keyword>
<keyword id="KW-0378">Hydrolase</keyword>
<keyword id="KW-0472">Membrane</keyword>
<keyword id="KW-0479">Metal-binding</keyword>
<keyword id="KW-0597">Phosphoprotein</keyword>
<keyword id="KW-0645">Protease</keyword>
<keyword id="KW-1185">Reference proteome</keyword>
<keyword id="KW-0677">Repeat</keyword>
<keyword id="KW-0964">Secreted</keyword>
<keyword id="KW-0720">Serine protease</keyword>
<keyword id="KW-0732">Signal</keyword>
<keyword id="KW-0812">Transmembrane</keyword>
<keyword id="KW-1133">Transmembrane helix</keyword>
<keyword id="KW-0865">Zymogen</keyword>
<protein>
    <recommendedName>
        <fullName>Furin</fullName>
        <ecNumber evidence="8">3.4.21.75</ecNumber>
    </recommendedName>
    <alternativeName>
        <fullName>Dibasic-processing enzyme</fullName>
    </alternativeName>
    <alternativeName>
        <fullName>Paired basic amino acid residue-cleaving enzyme</fullName>
        <shortName>PACE</shortName>
    </alternativeName>
    <alternativeName>
        <fullName>Trans Golgi network protease furin</fullName>
    </alternativeName>
</protein>
<feature type="signal peptide" evidence="3">
    <location>
        <begin position="1"/>
        <end position="26"/>
    </location>
</feature>
<feature type="propeptide" id="PRO_0000027026" description="Inhibition peptide" evidence="1">
    <location>
        <begin position="27"/>
        <end position="107"/>
    </location>
</feature>
<feature type="chain" id="PRO_0000027027" description="Furin">
    <location>
        <begin position="108"/>
        <end position="797"/>
    </location>
</feature>
<feature type="topological domain" description="Lumenal" evidence="9">
    <location>
        <begin position="108"/>
        <end position="718"/>
    </location>
</feature>
<feature type="transmembrane region" description="Helical" evidence="3">
    <location>
        <begin position="719"/>
        <end position="739"/>
    </location>
</feature>
<feature type="topological domain" description="Cytoplasmic" evidence="9">
    <location>
        <begin position="740"/>
        <end position="797"/>
    </location>
</feature>
<feature type="domain" description="Peptidase S8" evidence="6">
    <location>
        <begin position="121"/>
        <end position="435"/>
    </location>
</feature>
<feature type="domain" description="P/Homo B" evidence="5">
    <location>
        <begin position="444"/>
        <end position="576"/>
    </location>
</feature>
<feature type="repeat" description="FU 1" evidence="3">
    <location>
        <begin position="577"/>
        <end position="620"/>
    </location>
</feature>
<feature type="repeat" description="FU 2" evidence="3">
    <location>
        <begin position="638"/>
        <end position="681"/>
    </location>
</feature>
<feature type="region of interest" description="Disordered" evidence="7">
    <location>
        <begin position="160"/>
        <end position="183"/>
    </location>
</feature>
<feature type="region of interest" description="Disordered" evidence="7">
    <location>
        <begin position="673"/>
        <end position="702"/>
    </location>
</feature>
<feature type="region of interest" description="Cell surface signal" evidence="1">
    <location>
        <begin position="762"/>
        <end position="765"/>
    </location>
</feature>
<feature type="region of interest" description="Disordered" evidence="7">
    <location>
        <begin position="770"/>
        <end position="797"/>
    </location>
</feature>
<feature type="short sequence motif" description="Cell attachment site" evidence="4">
    <location>
        <begin position="498"/>
        <end position="500"/>
    </location>
</feature>
<feature type="short sequence motif" description="Trans Golgi network signal" evidence="1">
    <location>
        <begin position="776"/>
        <end position="782"/>
    </location>
</feature>
<feature type="compositionally biased region" description="Pro residues" evidence="7">
    <location>
        <begin position="689"/>
        <end position="699"/>
    </location>
</feature>
<feature type="compositionally biased region" description="Acidic residues" evidence="7">
    <location>
        <begin position="770"/>
        <end position="783"/>
    </location>
</feature>
<feature type="active site" description="Charge relay system" evidence="6">
    <location>
        <position position="153"/>
    </location>
</feature>
<feature type="active site" description="Charge relay system" evidence="6">
    <location>
        <position position="194"/>
    </location>
</feature>
<feature type="active site" description="Charge relay system" evidence="6">
    <location>
        <position position="368"/>
    </location>
</feature>
<feature type="binding site" evidence="1">
    <location>
        <position position="115"/>
    </location>
    <ligand>
        <name>Ca(2+)</name>
        <dbReference type="ChEBI" id="CHEBI:29108"/>
        <label>1</label>
    </ligand>
</feature>
<feature type="binding site" evidence="1">
    <location>
        <position position="154"/>
    </location>
    <ligand>
        <name>substrate</name>
    </ligand>
</feature>
<feature type="binding site" evidence="1">
    <location>
        <position position="162"/>
    </location>
    <ligand>
        <name>Ca(2+)</name>
        <dbReference type="ChEBI" id="CHEBI:29108"/>
        <label>1</label>
    </ligand>
</feature>
<feature type="binding site" evidence="1">
    <location>
        <position position="174"/>
    </location>
    <ligand>
        <name>Ca(2+)</name>
        <dbReference type="ChEBI" id="CHEBI:29108"/>
        <label>2</label>
    </ligand>
</feature>
<feature type="binding site" evidence="1">
    <location>
        <position position="179"/>
    </location>
    <ligand>
        <name>Ca(2+)</name>
        <dbReference type="ChEBI" id="CHEBI:29108"/>
        <label>2</label>
    </ligand>
</feature>
<feature type="binding site" evidence="1">
    <location>
        <position position="181"/>
    </location>
    <ligand>
        <name>Ca(2+)</name>
        <dbReference type="ChEBI" id="CHEBI:29108"/>
        <label>2</label>
    </ligand>
</feature>
<feature type="binding site" evidence="1">
    <location>
        <begin position="191"/>
        <end position="192"/>
    </location>
    <ligand>
        <name>substrate</name>
    </ligand>
</feature>
<feature type="binding site" evidence="1">
    <location>
        <position position="205"/>
    </location>
    <ligand>
        <name>Ca(2+)</name>
        <dbReference type="ChEBI" id="CHEBI:29108"/>
        <label>1</label>
    </ligand>
</feature>
<feature type="binding site" evidence="1">
    <location>
        <position position="208"/>
    </location>
    <ligand>
        <name>Ca(2+)</name>
        <dbReference type="ChEBI" id="CHEBI:29108"/>
        <label>1</label>
    </ligand>
</feature>
<feature type="binding site" evidence="1">
    <location>
        <position position="210"/>
    </location>
    <ligand>
        <name>Ca(2+)</name>
        <dbReference type="ChEBI" id="CHEBI:29108"/>
        <label>1</label>
    </ligand>
</feature>
<feature type="binding site" evidence="1">
    <location>
        <position position="212"/>
    </location>
    <ligand>
        <name>Ca(2+)</name>
        <dbReference type="ChEBI" id="CHEBI:29108"/>
        <label>1</label>
    </ligand>
</feature>
<feature type="binding site" evidence="1">
    <location>
        <position position="236"/>
    </location>
    <ligand>
        <name>substrate</name>
    </ligand>
</feature>
<feature type="binding site" evidence="1">
    <location>
        <begin position="253"/>
        <end position="258"/>
    </location>
    <ligand>
        <name>substrate</name>
    </ligand>
</feature>
<feature type="binding site" evidence="1">
    <location>
        <position position="258"/>
    </location>
    <ligand>
        <name>Ca(2+)</name>
        <dbReference type="ChEBI" id="CHEBI:29108"/>
        <label>3</label>
    </ligand>
</feature>
<feature type="binding site" evidence="1">
    <location>
        <position position="264"/>
    </location>
    <ligand>
        <name>substrate</name>
    </ligand>
</feature>
<feature type="binding site" evidence="1">
    <location>
        <begin position="292"/>
        <end position="295"/>
    </location>
    <ligand>
        <name>substrate</name>
    </ligand>
</feature>
<feature type="binding site" evidence="1">
    <location>
        <position position="301"/>
    </location>
    <ligand>
        <name>Ca(2+)</name>
        <dbReference type="ChEBI" id="CHEBI:29108"/>
        <label>3</label>
    </ligand>
</feature>
<feature type="binding site" evidence="1">
    <location>
        <position position="306"/>
    </location>
    <ligand>
        <name>substrate</name>
    </ligand>
</feature>
<feature type="binding site" evidence="1">
    <location>
        <position position="308"/>
    </location>
    <ligand>
        <name>substrate</name>
    </ligand>
</feature>
<feature type="binding site" evidence="1">
    <location>
        <position position="331"/>
    </location>
    <ligand>
        <name>Ca(2+)</name>
        <dbReference type="ChEBI" id="CHEBI:29108"/>
        <label>3</label>
    </ligand>
</feature>
<feature type="binding site" evidence="1">
    <location>
        <position position="368"/>
    </location>
    <ligand>
        <name>substrate</name>
    </ligand>
</feature>
<feature type="site" description="Cleavage, second; by autolysis" evidence="1">
    <location>
        <begin position="75"/>
        <end position="76"/>
    </location>
</feature>
<feature type="site" description="Cleavage, first; by autolysis" evidence="1">
    <location>
        <begin position="107"/>
        <end position="108"/>
    </location>
</feature>
<feature type="modified residue" description="Phosphoserine" evidence="1">
    <location>
        <position position="776"/>
    </location>
</feature>
<feature type="modified residue" description="Phosphoserine" evidence="1">
    <location>
        <position position="778"/>
    </location>
</feature>
<feature type="glycosylation site" description="N-linked (GlcNAc...) asparagine" evidence="3">
    <location>
        <position position="387"/>
    </location>
</feature>
<feature type="glycosylation site" description="N-linked (GlcNAc...) asparagine" evidence="3">
    <location>
        <position position="440"/>
    </location>
</feature>
<feature type="glycosylation site" description="N-linked (GlcNAc...) asparagine" evidence="3">
    <location>
        <position position="553"/>
    </location>
</feature>
<feature type="disulfide bond" evidence="2">
    <location>
        <begin position="211"/>
        <end position="360"/>
    </location>
</feature>
<feature type="disulfide bond" evidence="2">
    <location>
        <begin position="303"/>
        <end position="333"/>
    </location>
</feature>
<feature type="disulfide bond" evidence="2">
    <location>
        <begin position="450"/>
        <end position="474"/>
    </location>
</feature>